<organism>
    <name type="scientific">Homo sapiens</name>
    <name type="common">Human</name>
    <dbReference type="NCBI Taxonomy" id="9606"/>
    <lineage>
        <taxon>Eukaryota</taxon>
        <taxon>Metazoa</taxon>
        <taxon>Chordata</taxon>
        <taxon>Craniata</taxon>
        <taxon>Vertebrata</taxon>
        <taxon>Euteleostomi</taxon>
        <taxon>Mammalia</taxon>
        <taxon>Eutheria</taxon>
        <taxon>Euarchontoglires</taxon>
        <taxon>Primates</taxon>
        <taxon>Haplorrhini</taxon>
        <taxon>Catarrhini</taxon>
        <taxon>Hominidae</taxon>
        <taxon>Homo</taxon>
    </lineage>
</organism>
<gene>
    <name type="primary">ZNF230</name>
    <name type="synonym">FDZF2</name>
</gene>
<comment type="function">
    <text>May be involved in transcriptional regulation.</text>
</comment>
<comment type="interaction">
    <interactant intactId="EBI-1105361">
        <id>Q9UIE0</id>
    </interactant>
    <interactant intactId="EBI-11977221">
        <id>Q86Z20</id>
        <label>CCDC125</label>
    </interactant>
    <organismsDiffer>false</organismsDiffer>
    <experiments>3</experiments>
</comment>
<comment type="interaction">
    <interactant intactId="EBI-1105361">
        <id>Q9UIE0</id>
    </interactant>
    <interactant intactId="EBI-10171416">
        <id>Q96JN2-2</id>
        <label>CCDC136</label>
    </interactant>
    <organismsDiffer>false</organismsDiffer>
    <experiments>3</experiments>
</comment>
<comment type="interaction">
    <interactant intactId="EBI-1105361">
        <id>Q9UIE0</id>
    </interactant>
    <interactant intactId="EBI-748961">
        <id>O95273</id>
        <label>CCNDBP1</label>
    </interactant>
    <organismsDiffer>false</organismsDiffer>
    <experiments>3</experiments>
</comment>
<comment type="interaction">
    <interactant intactId="EBI-1105361">
        <id>Q9UIE0</id>
    </interactant>
    <interactant intactId="EBI-5661036">
        <id>A1L4K1</id>
        <label>FSD2</label>
    </interactant>
    <organismsDiffer>false</organismsDiffer>
    <experiments>3</experiments>
</comment>
<comment type="interaction">
    <interactant intactId="EBI-1105361">
        <id>Q9UIE0</id>
    </interactant>
    <interactant intactId="EBI-5916454">
        <id>A6NEM1</id>
        <label>GOLGA6L9</label>
    </interactant>
    <organismsDiffer>false</organismsDiffer>
    <experiments>3</experiments>
</comment>
<comment type="interaction">
    <interactant intactId="EBI-1105361">
        <id>Q9UIE0</id>
    </interactant>
    <interactant intactId="EBI-10171697">
        <id>Q6A162</id>
        <label>KRT40</label>
    </interactant>
    <organismsDiffer>false</organismsDiffer>
    <experiments>3</experiments>
</comment>
<comment type="interaction">
    <interactant intactId="EBI-1105361">
        <id>Q9UIE0</id>
    </interactant>
    <interactant intactId="EBI-724076">
        <id>Q99750</id>
        <label>MDFI</label>
    </interactant>
    <organismsDiffer>false</organismsDiffer>
    <experiments>3</experiments>
</comment>
<comment type="interaction">
    <interactant intactId="EBI-1105361">
        <id>Q9UIE0</id>
    </interactant>
    <interactant intactId="EBI-11522433">
        <id>Q5JR59-3</id>
        <label>MTUS2</label>
    </interactant>
    <organismsDiffer>false</organismsDiffer>
    <experiments>3</experiments>
</comment>
<comment type="subcellular location">
    <subcellularLocation>
        <location evidence="3">Nucleus</location>
    </subcellularLocation>
</comment>
<comment type="similarity">
    <text evidence="3">Belongs to the krueppel C2H2-type zinc-finger protein family.</text>
</comment>
<sequence>MTTFKEAVTFKDVAVFFTEEELGLLDPAQRKLYQDVMLENFTNLLSVGHQPFHPFHFLREEKFWMMETATQREGNSGGKTIAEAGPHEDCPCQQIWEQTASDLTQSQDSIINNSHFFEQGDVPSQVEAGLSIIHTGQKPSQNGKCKQSFSDVAIFDPPQQFHSGEKSHTCNECGKSFCYISALRIHQRVHLREKLSKCDMRGKEFSQSSCLQTRERVHTGEKPFKCEQCGKGFRCRAILQVHCKLHTGEKPYICEKCGRAFIHDFQLQKHQIIHTGEKPFKCEICGKSFCLRSSLNRHCMVHTAEKLYKSEECGKGFTDSLDLHKHQIIHTGQKPYNCKECGKSFRWSSYLLIHQRIHSGEKPYRCEECGKGYISKSGLNLHQRVHTGERPYNCKECGKSFSRASSILNHKKLHCRKKPFKCEDCGKRLVHRSFCKDQQGDHNGENSSKCEDCGKRYKRRLNLDIILSLFLNDM</sequence>
<reference key="1">
    <citation type="submission" date="1997-03" db="EMBL/GenBank/DDBJ databases">
        <title>Cloning of a novel KRAB-containing zinc finger gene, FDZF2.</title>
        <authorList>
            <person name="Wu G."/>
            <person name="Yu L."/>
        </authorList>
    </citation>
    <scope>NUCLEOTIDE SEQUENCE [MRNA]</scope>
    <source>
        <tissue>Liver</tissue>
    </source>
</reference>
<reference key="2">
    <citation type="journal article" date="2004" name="Nature">
        <title>The DNA sequence and biology of human chromosome 19.</title>
        <authorList>
            <person name="Grimwood J."/>
            <person name="Gordon L.A."/>
            <person name="Olsen A.S."/>
            <person name="Terry A."/>
            <person name="Schmutz J."/>
            <person name="Lamerdin J.E."/>
            <person name="Hellsten U."/>
            <person name="Goodstein D."/>
            <person name="Couronne O."/>
            <person name="Tran-Gyamfi M."/>
            <person name="Aerts A."/>
            <person name="Altherr M."/>
            <person name="Ashworth L."/>
            <person name="Bajorek E."/>
            <person name="Black S."/>
            <person name="Branscomb E."/>
            <person name="Caenepeel S."/>
            <person name="Carrano A.V."/>
            <person name="Caoile C."/>
            <person name="Chan Y.M."/>
            <person name="Christensen M."/>
            <person name="Cleland C.A."/>
            <person name="Copeland A."/>
            <person name="Dalin E."/>
            <person name="Dehal P."/>
            <person name="Denys M."/>
            <person name="Detter J.C."/>
            <person name="Escobar J."/>
            <person name="Flowers D."/>
            <person name="Fotopulos D."/>
            <person name="Garcia C."/>
            <person name="Georgescu A.M."/>
            <person name="Glavina T."/>
            <person name="Gomez M."/>
            <person name="Gonzales E."/>
            <person name="Groza M."/>
            <person name="Hammon N."/>
            <person name="Hawkins T."/>
            <person name="Haydu L."/>
            <person name="Ho I."/>
            <person name="Huang W."/>
            <person name="Israni S."/>
            <person name="Jett J."/>
            <person name="Kadner K."/>
            <person name="Kimball H."/>
            <person name="Kobayashi A."/>
            <person name="Larionov V."/>
            <person name="Leem S.-H."/>
            <person name="Lopez F."/>
            <person name="Lou Y."/>
            <person name="Lowry S."/>
            <person name="Malfatti S."/>
            <person name="Martinez D."/>
            <person name="McCready P.M."/>
            <person name="Medina C."/>
            <person name="Morgan J."/>
            <person name="Nelson K."/>
            <person name="Nolan M."/>
            <person name="Ovcharenko I."/>
            <person name="Pitluck S."/>
            <person name="Pollard M."/>
            <person name="Popkie A.P."/>
            <person name="Predki P."/>
            <person name="Quan G."/>
            <person name="Ramirez L."/>
            <person name="Rash S."/>
            <person name="Retterer J."/>
            <person name="Rodriguez A."/>
            <person name="Rogers S."/>
            <person name="Salamov A."/>
            <person name="Salazar A."/>
            <person name="She X."/>
            <person name="Smith D."/>
            <person name="Slezak T."/>
            <person name="Solovyev V."/>
            <person name="Thayer N."/>
            <person name="Tice H."/>
            <person name="Tsai M."/>
            <person name="Ustaszewska A."/>
            <person name="Vo N."/>
            <person name="Wagner M."/>
            <person name="Wheeler J."/>
            <person name="Wu K."/>
            <person name="Xie G."/>
            <person name="Yang J."/>
            <person name="Dubchak I."/>
            <person name="Furey T.S."/>
            <person name="DeJong P."/>
            <person name="Dickson M."/>
            <person name="Gordon D."/>
            <person name="Eichler E.E."/>
            <person name="Pennacchio L.A."/>
            <person name="Richardson P."/>
            <person name="Stubbs L."/>
            <person name="Rokhsar D.S."/>
            <person name="Myers R.M."/>
            <person name="Rubin E.M."/>
            <person name="Lucas S.M."/>
        </authorList>
    </citation>
    <scope>NUCLEOTIDE SEQUENCE [LARGE SCALE GENOMIC DNA]</scope>
</reference>
<reference key="3">
    <citation type="journal article" date="2004" name="Genome Res.">
        <title>The status, quality, and expansion of the NIH full-length cDNA project: the Mammalian Gene Collection (MGC).</title>
        <authorList>
            <consortium name="The MGC Project Team"/>
        </authorList>
    </citation>
    <scope>NUCLEOTIDE SEQUENCE [LARGE SCALE MRNA]</scope>
    <source>
        <tissue>Testis</tissue>
    </source>
</reference>
<dbReference type="EMBL" id="U95044">
    <property type="protein sequence ID" value="AAB62180.1"/>
    <property type="molecule type" value="mRNA"/>
</dbReference>
<dbReference type="EMBL" id="AC018725">
    <property type="protein sequence ID" value="AAF18685.1"/>
    <property type="molecule type" value="Genomic_DNA"/>
</dbReference>
<dbReference type="EMBL" id="AC067968">
    <property type="protein sequence ID" value="AAF66074.1"/>
    <property type="molecule type" value="Genomic_DNA"/>
</dbReference>
<dbReference type="EMBL" id="BC050340">
    <property type="protein sequence ID" value="AAH50340.2"/>
    <property type="molecule type" value="mRNA"/>
</dbReference>
<dbReference type="EMBL" id="BC094708">
    <property type="protein sequence ID" value="AAH94708.1"/>
    <property type="molecule type" value="mRNA"/>
</dbReference>
<dbReference type="CCDS" id="CCDS33044.1"/>
<dbReference type="RefSeq" id="NP_006291.2">
    <property type="nucleotide sequence ID" value="NM_006300.4"/>
</dbReference>
<dbReference type="SMR" id="Q9UIE0"/>
<dbReference type="BioGRID" id="113556">
    <property type="interactions" value="13"/>
</dbReference>
<dbReference type="FunCoup" id="Q9UIE0">
    <property type="interactions" value="142"/>
</dbReference>
<dbReference type="IntAct" id="Q9UIE0">
    <property type="interactions" value="10"/>
</dbReference>
<dbReference type="STRING" id="9606.ENSP00000409318"/>
<dbReference type="iPTMnet" id="Q9UIE0"/>
<dbReference type="PhosphoSitePlus" id="Q9UIE0"/>
<dbReference type="BioMuta" id="ZNF230"/>
<dbReference type="DMDM" id="125987869"/>
<dbReference type="jPOST" id="Q9UIE0"/>
<dbReference type="MassIVE" id="Q9UIE0"/>
<dbReference type="PaxDb" id="9606-ENSP00000409318"/>
<dbReference type="PeptideAtlas" id="Q9UIE0"/>
<dbReference type="Pumba" id="Q9UIE0"/>
<dbReference type="Antibodypedia" id="17681">
    <property type="antibodies" value="132 antibodies from 18 providers"/>
</dbReference>
<dbReference type="DNASU" id="7773"/>
<dbReference type="Ensembl" id="ENST00000429154.7">
    <property type="protein sequence ID" value="ENSP00000409318.1"/>
    <property type="gene ID" value="ENSG00000159882.13"/>
</dbReference>
<dbReference type="GeneID" id="7773"/>
<dbReference type="KEGG" id="hsa:7773"/>
<dbReference type="MANE-Select" id="ENST00000429154.7">
    <property type="protein sequence ID" value="ENSP00000409318.1"/>
    <property type="RefSeq nucleotide sequence ID" value="NM_006300.4"/>
    <property type="RefSeq protein sequence ID" value="NP_006291.2"/>
</dbReference>
<dbReference type="UCSC" id="uc002oyb.2">
    <property type="organism name" value="human"/>
</dbReference>
<dbReference type="AGR" id="HGNC:13024"/>
<dbReference type="CTD" id="7773"/>
<dbReference type="DisGeNET" id="7773"/>
<dbReference type="GeneCards" id="ZNF230"/>
<dbReference type="HGNC" id="HGNC:13024">
    <property type="gene designation" value="ZNF230"/>
</dbReference>
<dbReference type="HPA" id="ENSG00000159882">
    <property type="expression patterns" value="Low tissue specificity"/>
</dbReference>
<dbReference type="MIM" id="620998">
    <property type="type" value="gene"/>
</dbReference>
<dbReference type="neXtProt" id="NX_Q9UIE0"/>
<dbReference type="OpenTargets" id="ENSG00000159882"/>
<dbReference type="PharmGKB" id="PA37603"/>
<dbReference type="VEuPathDB" id="HostDB:ENSG00000159882"/>
<dbReference type="eggNOG" id="KOG1721">
    <property type="taxonomic scope" value="Eukaryota"/>
</dbReference>
<dbReference type="GeneTree" id="ENSGT00940000163825"/>
<dbReference type="HOGENOM" id="CLU_002678_44_17_1"/>
<dbReference type="InParanoid" id="Q9UIE0"/>
<dbReference type="OMA" id="VHRSFCK"/>
<dbReference type="OrthoDB" id="9411774at2759"/>
<dbReference type="PAN-GO" id="Q9UIE0">
    <property type="GO annotations" value="4 GO annotations based on evolutionary models"/>
</dbReference>
<dbReference type="PhylomeDB" id="Q9UIE0"/>
<dbReference type="TreeFam" id="TF341885"/>
<dbReference type="PathwayCommons" id="Q9UIE0"/>
<dbReference type="Reactome" id="R-HSA-212436">
    <property type="pathway name" value="Generic Transcription Pathway"/>
</dbReference>
<dbReference type="SignaLink" id="Q9UIE0"/>
<dbReference type="BioGRID-ORCS" id="7773">
    <property type="hits" value="12 hits in 1168 CRISPR screens"/>
</dbReference>
<dbReference type="ChiTaRS" id="ZNF230">
    <property type="organism name" value="human"/>
</dbReference>
<dbReference type="GenomeRNAi" id="7773"/>
<dbReference type="Pharos" id="Q9UIE0">
    <property type="development level" value="Tbio"/>
</dbReference>
<dbReference type="PRO" id="PR:Q9UIE0"/>
<dbReference type="Proteomes" id="UP000005640">
    <property type="component" value="Chromosome 19"/>
</dbReference>
<dbReference type="RNAct" id="Q9UIE0">
    <property type="molecule type" value="protein"/>
</dbReference>
<dbReference type="Bgee" id="ENSG00000159882">
    <property type="expression patterns" value="Expressed in blood and 119 other cell types or tissues"/>
</dbReference>
<dbReference type="ExpressionAtlas" id="Q9UIE0">
    <property type="expression patterns" value="baseline and differential"/>
</dbReference>
<dbReference type="GO" id="GO:0005634">
    <property type="term" value="C:nucleus"/>
    <property type="evidence" value="ECO:0007669"/>
    <property type="project" value="UniProtKB-SubCell"/>
</dbReference>
<dbReference type="GO" id="GO:0003677">
    <property type="term" value="F:DNA binding"/>
    <property type="evidence" value="ECO:0007669"/>
    <property type="project" value="UniProtKB-KW"/>
</dbReference>
<dbReference type="GO" id="GO:0003700">
    <property type="term" value="F:DNA-binding transcription factor activity"/>
    <property type="evidence" value="ECO:0000303"/>
    <property type="project" value="ARUK-UCL"/>
</dbReference>
<dbReference type="GO" id="GO:0008270">
    <property type="term" value="F:zinc ion binding"/>
    <property type="evidence" value="ECO:0007669"/>
    <property type="project" value="UniProtKB-KW"/>
</dbReference>
<dbReference type="CDD" id="cd07765">
    <property type="entry name" value="KRAB_A-box"/>
    <property type="match status" value="1"/>
</dbReference>
<dbReference type="FunFam" id="3.30.160.60:FF:002775">
    <property type="entry name" value="Uncharacterized protein"/>
    <property type="match status" value="1"/>
</dbReference>
<dbReference type="FunFam" id="3.30.160.60:FF:000295">
    <property type="entry name" value="zinc finger protein 19"/>
    <property type="match status" value="2"/>
</dbReference>
<dbReference type="FunFam" id="3.30.160.60:FF:001189">
    <property type="entry name" value="Zinc finger protein 222"/>
    <property type="match status" value="1"/>
</dbReference>
<dbReference type="FunFam" id="3.30.160.60:FF:001597">
    <property type="entry name" value="Zinc finger protein 222"/>
    <property type="match status" value="1"/>
</dbReference>
<dbReference type="FunFam" id="3.30.160.60:FF:001750">
    <property type="entry name" value="Zinc finger protein 222"/>
    <property type="match status" value="1"/>
</dbReference>
<dbReference type="FunFam" id="3.30.160.60:FF:001979">
    <property type="entry name" value="Zinc finger protein 222"/>
    <property type="match status" value="1"/>
</dbReference>
<dbReference type="FunFam" id="3.30.160.60:FF:000176">
    <property type="entry name" value="zinc finger protein 70"/>
    <property type="match status" value="1"/>
</dbReference>
<dbReference type="FunFam" id="3.30.160.60:FF:002624">
    <property type="entry name" value="ZNF230 isoform 1"/>
    <property type="match status" value="1"/>
</dbReference>
<dbReference type="Gene3D" id="6.10.140.140">
    <property type="match status" value="1"/>
</dbReference>
<dbReference type="Gene3D" id="3.30.160.60">
    <property type="entry name" value="Classic Zinc Finger"/>
    <property type="match status" value="10"/>
</dbReference>
<dbReference type="InterPro" id="IPR001909">
    <property type="entry name" value="KRAB"/>
</dbReference>
<dbReference type="InterPro" id="IPR036051">
    <property type="entry name" value="KRAB_dom_sf"/>
</dbReference>
<dbReference type="InterPro" id="IPR036236">
    <property type="entry name" value="Znf_C2H2_sf"/>
</dbReference>
<dbReference type="InterPro" id="IPR013087">
    <property type="entry name" value="Znf_C2H2_type"/>
</dbReference>
<dbReference type="PANTHER" id="PTHR24394">
    <property type="entry name" value="ZINC FINGER PROTEIN"/>
    <property type="match status" value="1"/>
</dbReference>
<dbReference type="PANTHER" id="PTHR24394:SF48">
    <property type="entry name" value="ZINC FINGER PROTEIN 771"/>
    <property type="match status" value="1"/>
</dbReference>
<dbReference type="Pfam" id="PF01352">
    <property type="entry name" value="KRAB"/>
    <property type="match status" value="1"/>
</dbReference>
<dbReference type="Pfam" id="PF00096">
    <property type="entry name" value="zf-C2H2"/>
    <property type="match status" value="6"/>
</dbReference>
<dbReference type="SMART" id="SM00349">
    <property type="entry name" value="KRAB"/>
    <property type="match status" value="1"/>
</dbReference>
<dbReference type="SMART" id="SM00355">
    <property type="entry name" value="ZnF_C2H2"/>
    <property type="match status" value="8"/>
</dbReference>
<dbReference type="SUPFAM" id="SSF57667">
    <property type="entry name" value="beta-beta-alpha zinc fingers"/>
    <property type="match status" value="6"/>
</dbReference>
<dbReference type="SUPFAM" id="SSF109640">
    <property type="entry name" value="KRAB domain (Kruppel-associated box)"/>
    <property type="match status" value="1"/>
</dbReference>
<dbReference type="PROSITE" id="PS50805">
    <property type="entry name" value="KRAB"/>
    <property type="match status" value="1"/>
</dbReference>
<dbReference type="PROSITE" id="PS00028">
    <property type="entry name" value="ZINC_FINGER_C2H2_1"/>
    <property type="match status" value="7"/>
</dbReference>
<dbReference type="PROSITE" id="PS50157">
    <property type="entry name" value="ZINC_FINGER_C2H2_2"/>
    <property type="match status" value="10"/>
</dbReference>
<protein>
    <recommendedName>
        <fullName>Zinc finger protein 230</fullName>
    </recommendedName>
    <alternativeName>
        <fullName>Zinc finger protein FDZF2</fullName>
    </alternativeName>
</protein>
<keyword id="KW-0238">DNA-binding</keyword>
<keyword id="KW-0479">Metal-binding</keyword>
<keyword id="KW-0539">Nucleus</keyword>
<keyword id="KW-1267">Proteomics identification</keyword>
<keyword id="KW-1185">Reference proteome</keyword>
<keyword id="KW-0677">Repeat</keyword>
<keyword id="KW-0804">Transcription</keyword>
<keyword id="KW-0805">Transcription regulation</keyword>
<keyword id="KW-0862">Zinc</keyword>
<keyword id="KW-0863">Zinc-finger</keyword>
<proteinExistence type="evidence at protein level"/>
<feature type="chain" id="PRO_0000047471" description="Zinc finger protein 230">
    <location>
        <begin position="1"/>
        <end position="474"/>
    </location>
</feature>
<feature type="domain" description="KRAB" evidence="2">
    <location>
        <begin position="8"/>
        <end position="76"/>
    </location>
</feature>
<feature type="zinc finger region" description="C2H2-type 1" evidence="1">
    <location>
        <begin position="168"/>
        <end position="190"/>
    </location>
</feature>
<feature type="zinc finger region" description="C2H2-type 2" evidence="1">
    <location>
        <begin position="196"/>
        <end position="218"/>
    </location>
</feature>
<feature type="zinc finger region" description="C2H2-type 3" evidence="1">
    <location>
        <begin position="224"/>
        <end position="246"/>
    </location>
</feature>
<feature type="zinc finger region" description="C2H2-type 4" evidence="1">
    <location>
        <begin position="252"/>
        <end position="274"/>
    </location>
</feature>
<feature type="zinc finger region" description="C2H2-type 5" evidence="1">
    <location>
        <begin position="280"/>
        <end position="302"/>
    </location>
</feature>
<feature type="zinc finger region" description="C2H2-type 6" evidence="1">
    <location>
        <begin position="308"/>
        <end position="330"/>
    </location>
</feature>
<feature type="zinc finger region" description="C2H2-type 7" evidence="1">
    <location>
        <begin position="336"/>
        <end position="358"/>
    </location>
</feature>
<feature type="zinc finger region" description="C2H2-type 8" evidence="1">
    <location>
        <begin position="364"/>
        <end position="386"/>
    </location>
</feature>
<feature type="zinc finger region" description="C2H2-type 9" evidence="1">
    <location>
        <begin position="392"/>
        <end position="414"/>
    </location>
</feature>
<feature type="zinc finger region" description="C2H2-type 10; atypical" evidence="1">
    <location>
        <begin position="420"/>
        <end position="442"/>
    </location>
</feature>
<feature type="region of interest" description="KRNB">
    <location>
        <begin position="80"/>
        <end position="167"/>
    </location>
</feature>
<feature type="sequence variant" id="VAR_030534" description="In dbSNP:rs1060877.">
    <original>S</original>
    <variation>C</variation>
    <location>
        <position position="310"/>
    </location>
</feature>
<feature type="sequence variant" id="VAR_030535" description="In dbSNP:rs6413542.">
    <original>F</original>
    <variation>Y</variation>
    <location>
        <position position="434"/>
    </location>
</feature>
<feature type="sequence variant" id="VAR_014827" description="In dbSNP:rs12753.">
    <original>D</original>
    <variation>E</variation>
    <location>
        <position position="441"/>
    </location>
</feature>
<feature type="sequence conflict" description="In Ref. 1; AAB62180." evidence="3" ref="1">
    <original>D</original>
    <variation>H</variation>
    <location>
        <position position="26"/>
    </location>
</feature>
<feature type="sequence conflict" description="In Ref. 1; AAB62180." evidence="3" ref="1">
    <original>C</original>
    <variation>V</variation>
    <location>
        <position position="92"/>
    </location>
</feature>
<feature type="sequence conflict" description="In Ref. 1; AAB62180." evidence="3" ref="1">
    <original>R</original>
    <variation>C</variation>
    <location>
        <position position="201"/>
    </location>
</feature>
<feature type="sequence conflict" description="In Ref. 1; AAB62180." evidence="3" ref="1">
    <original>R</original>
    <variation>H</variation>
    <location>
        <position position="214"/>
    </location>
</feature>
<feature type="sequence conflict" description="In Ref. 1; AAB62180." evidence="3" ref="1">
    <original>G</original>
    <variation>R</variation>
    <location>
        <position position="220"/>
    </location>
</feature>
<feature type="sequence conflict" description="In Ref. 1; AAB62180." evidence="3" ref="1">
    <original>FQ</original>
    <variation>LK</variation>
    <location>
        <begin position="265"/>
        <end position="266"/>
    </location>
</feature>
<feature type="sequence conflict" description="In Ref. 1; AAB62180." evidence="3" ref="1">
    <original>F</original>
    <variation>S</variation>
    <location>
        <position position="280"/>
    </location>
</feature>
<feature type="sequence conflict" description="In Ref. 1; AAB62180." evidence="3" ref="1">
    <original>C</original>
    <variation>Y</variation>
    <location>
        <position position="299"/>
    </location>
</feature>
<feature type="sequence conflict" description="In Ref. 1; AAB62180." evidence="3" ref="1">
    <original>YKS</original>
    <variation>SKC</variation>
    <location>
        <begin position="308"/>
        <end position="310"/>
    </location>
</feature>
<feature type="sequence conflict" description="In Ref. 1; AAB62180." evidence="3" ref="1">
    <original>QRV</original>
    <variation>PEG</variation>
    <location>
        <begin position="383"/>
        <end position="385"/>
    </location>
</feature>
<accession>Q9UIE0</accession>
<accession>O15322</accession>
<accession>Q504X7</accession>
<accession>Q86W84</accession>
<accession>Q9P1U6</accession>
<evidence type="ECO:0000255" key="1">
    <source>
        <dbReference type="PROSITE-ProRule" id="PRU00042"/>
    </source>
</evidence>
<evidence type="ECO:0000255" key="2">
    <source>
        <dbReference type="PROSITE-ProRule" id="PRU00119"/>
    </source>
</evidence>
<evidence type="ECO:0000305" key="3"/>
<name>ZN230_HUMAN</name>